<organism>
    <name type="scientific">Amblyomma americanum</name>
    <name type="common">Lone star tick</name>
    <dbReference type="NCBI Taxonomy" id="6943"/>
    <lineage>
        <taxon>Eukaryota</taxon>
        <taxon>Metazoa</taxon>
        <taxon>Ecdysozoa</taxon>
        <taxon>Arthropoda</taxon>
        <taxon>Chelicerata</taxon>
        <taxon>Arachnida</taxon>
        <taxon>Acari</taxon>
        <taxon>Parasitiformes</taxon>
        <taxon>Ixodida</taxon>
        <taxon>Ixodoidea</taxon>
        <taxon>Ixodidae</taxon>
        <taxon>Amblyomminae</taxon>
        <taxon>Amblyomma</taxon>
    </lineage>
</organism>
<evidence type="ECO:0000250" key="1">
    <source>
        <dbReference type="UniProtKB" id="L7MB58"/>
    </source>
</evidence>
<evidence type="ECO:0000255" key="2"/>
<evidence type="ECO:0000269" key="3">
    <source>
    </source>
</evidence>
<evidence type="ECO:0000303" key="4">
    <source>
    </source>
</evidence>
<evidence type="ECO:0000305" key="5"/>
<evidence type="ECO:0000305" key="6">
    <source>
    </source>
</evidence>
<reference key="1">
    <citation type="journal article" date="2009" name="Insect Mol. Biol.">
        <title>Transcriptome analysis of the salivary glands of the female tick Amblyomma americanum (Acari: Ixodidae).</title>
        <authorList>
            <person name="Aljamali M.N."/>
            <person name="Hern L."/>
            <person name="Kupfer D."/>
            <person name="Downard S."/>
            <person name="So S."/>
            <person name="Roe B.A."/>
            <person name="Sauer J.R."/>
            <person name="Essenberg R.C."/>
        </authorList>
    </citation>
    <scope>NUCLEOTIDE SEQUENCE [MRNA]</scope>
    <source>
        <tissue>Salivary gland</tissue>
    </source>
</reference>
<reference key="2">
    <citation type="journal article" date="2020" name="Proc. Natl. Acad. Sci. U.S.A.">
        <title>An inhibitor of complement C5 provides structural insights into activation.</title>
        <authorList>
            <person name="Reichhardt M.P."/>
            <person name="Johnson S."/>
            <person name="Tang T."/>
            <person name="Morgan T."/>
            <person name="Tebeka N."/>
            <person name="Popitsch N."/>
            <person name="Deme J.C."/>
            <person name="Jore M.M."/>
            <person name="Lea S.M."/>
        </authorList>
    </citation>
    <scope>FUNCTION</scope>
    <scope>RECOMBINANT EXPRESSION</scope>
    <source>
        <tissue>Salivary gland</tissue>
    </source>
</reference>
<comment type="function">
    <text evidence="1 3">Complement inhibitor (PubMed:31871188). Prevents complement-mediated activation of C5 by sterically preventing direct binding of C5 to its convertase (binding with domains MG4 and MG5) (By similarity) (PubMed:31871188). Binds C5 at a different binding site than the other tick complement inhibitors OmCI and RaCI3, and the drug eculizumab (By similarity). Inhibits the complement in human, rat and guinea pig, and also shows a reduced inhibition in rabbit and pig (By similarity).</text>
</comment>
<comment type="subcellular location">
    <subcellularLocation>
        <location evidence="6">Secreted</location>
    </subcellularLocation>
</comment>
<comment type="tissue specificity">
    <text evidence="6">Expressed in salivary glands.</text>
</comment>
<comment type="similarity">
    <text evidence="5">Belongs to the CirpT family.</text>
</comment>
<dbReference type="EMBL" id="CX766574">
    <property type="status" value="NOT_ANNOTATED_CDS"/>
    <property type="molecule type" value="mRNA"/>
</dbReference>
<dbReference type="SMR" id="P0DQV3"/>
<dbReference type="GO" id="GO:0005576">
    <property type="term" value="C:extracellular region"/>
    <property type="evidence" value="ECO:0007669"/>
    <property type="project" value="UniProtKB-SubCell"/>
</dbReference>
<dbReference type="InterPro" id="IPR029277">
    <property type="entry name" value="SVWC_dom"/>
</dbReference>
<dbReference type="Pfam" id="PF15430">
    <property type="entry name" value="SVWC"/>
    <property type="match status" value="1"/>
</dbReference>
<dbReference type="SMART" id="SM01318">
    <property type="entry name" value="SVWC"/>
    <property type="match status" value="1"/>
</dbReference>
<keyword id="KW-1015">Disulfide bond</keyword>
<keyword id="KW-0964">Secreted</keyword>
<keyword id="KW-0732">Signal</keyword>
<name>C5IT4_AMBAM</name>
<sequence>MRAFVALFCTLVAFATVICDIQEHGHSYLTRNVTVENGACIFERNTLPDGETKALHDPCVIATCYAARREVNATLCRNFGVDPGCRFHWRNDGVYPQCCPTQVCDGTD</sequence>
<proteinExistence type="inferred from homology"/>
<protein>
    <recommendedName>
        <fullName evidence="4">Complement inhibitor CirpT4</fullName>
    </recommendedName>
</protein>
<feature type="signal peptide" evidence="2">
    <location>
        <begin position="1"/>
        <end position="19"/>
    </location>
</feature>
<feature type="chain" id="PRO_0000456235" description="Complement inhibitor CirpT4">
    <location>
        <begin position="20"/>
        <end position="108"/>
    </location>
</feature>
<feature type="disulfide bond" evidence="1">
    <location>
        <begin position="40"/>
        <end position="64"/>
    </location>
</feature>
<feature type="disulfide bond" evidence="1">
    <location>
        <begin position="59"/>
        <end position="98"/>
    </location>
</feature>
<feature type="disulfide bond" evidence="1">
    <location>
        <begin position="76"/>
        <end position="99"/>
    </location>
</feature>
<feature type="disulfide bond" evidence="1">
    <location>
        <begin position="85"/>
        <end position="104"/>
    </location>
</feature>
<accession>P0DQV3</accession>